<comment type="function">
    <text evidence="1">Catalyzes the reversible phosphorylation of UMP to UDP.</text>
</comment>
<comment type="catalytic activity">
    <reaction evidence="1">
        <text>UMP + ATP = UDP + ADP</text>
        <dbReference type="Rhea" id="RHEA:24400"/>
        <dbReference type="ChEBI" id="CHEBI:30616"/>
        <dbReference type="ChEBI" id="CHEBI:57865"/>
        <dbReference type="ChEBI" id="CHEBI:58223"/>
        <dbReference type="ChEBI" id="CHEBI:456216"/>
        <dbReference type="EC" id="2.7.4.22"/>
    </reaction>
</comment>
<comment type="activity regulation">
    <text evidence="1">Allosterically activated by GTP. Inhibited by UTP.</text>
</comment>
<comment type="pathway">
    <text evidence="1">Pyrimidine metabolism; CTP biosynthesis via de novo pathway; UDP from UMP (UMPK route): step 1/1.</text>
</comment>
<comment type="subunit">
    <text evidence="1">Homohexamer.</text>
</comment>
<comment type="subcellular location">
    <subcellularLocation>
        <location evidence="1">Cytoplasm</location>
    </subcellularLocation>
</comment>
<comment type="similarity">
    <text evidence="1">Belongs to the UMP kinase family.</text>
</comment>
<evidence type="ECO:0000255" key="1">
    <source>
        <dbReference type="HAMAP-Rule" id="MF_01220"/>
    </source>
</evidence>
<keyword id="KW-0021">Allosteric enzyme</keyword>
<keyword id="KW-0067">ATP-binding</keyword>
<keyword id="KW-0963">Cytoplasm</keyword>
<keyword id="KW-0418">Kinase</keyword>
<keyword id="KW-0547">Nucleotide-binding</keyword>
<keyword id="KW-0665">Pyrimidine biosynthesis</keyword>
<keyword id="KW-1185">Reference proteome</keyword>
<keyword id="KW-0808">Transferase</keyword>
<accession>Q67PB5</accession>
<organism>
    <name type="scientific">Symbiobacterium thermophilum (strain DSM 24528 / JCM 14929 / IAM 14863 / T)</name>
    <dbReference type="NCBI Taxonomy" id="292459"/>
    <lineage>
        <taxon>Bacteria</taxon>
        <taxon>Bacillati</taxon>
        <taxon>Bacillota</taxon>
        <taxon>Clostridia</taxon>
        <taxon>Eubacteriales</taxon>
        <taxon>Symbiobacteriaceae</taxon>
        <taxon>Symbiobacterium</taxon>
    </lineage>
</organism>
<proteinExistence type="inferred from homology"/>
<gene>
    <name evidence="1" type="primary">pyrH</name>
    <name type="ordered locus">STH1493</name>
</gene>
<name>PYRH_SYMTH</name>
<protein>
    <recommendedName>
        <fullName evidence="1">Uridylate kinase</fullName>
        <shortName evidence="1">UK</shortName>
        <ecNumber evidence="1">2.7.4.22</ecNumber>
    </recommendedName>
    <alternativeName>
        <fullName evidence="1">Uridine monophosphate kinase</fullName>
        <shortName evidence="1">UMP kinase</shortName>
        <shortName evidence="1">UMPK</shortName>
    </alternativeName>
</protein>
<sequence length="243" mass="26587">MQTPKYRRVVLKLSGEALAGAKGFGLDPQVLTALARQIKAVHDMGVQVAIVVGAGNFWRGRLGEQMGMDRASADYMGLLATVMNALALQDAIEKLQVDTRVMTAVEMRQVAEPFIRRRAIRHLEKGRVVIFAAGTGNPYFTTDTAAALRAAEIEAEAILMGKQGVQGVYDSDPRINRHAVKYDEVTYQEVLAKNLQVMDATATALCMDNRIPIVVFDMMGPDHIVKVVLGEDVGQTFVRGNNQ</sequence>
<feature type="chain" id="PRO_1000054042" description="Uridylate kinase">
    <location>
        <begin position="1"/>
        <end position="243"/>
    </location>
</feature>
<feature type="region of interest" description="Involved in allosteric activation by GTP" evidence="1">
    <location>
        <begin position="20"/>
        <end position="25"/>
    </location>
</feature>
<feature type="binding site" evidence="1">
    <location>
        <begin position="12"/>
        <end position="15"/>
    </location>
    <ligand>
        <name>ATP</name>
        <dbReference type="ChEBI" id="CHEBI:30616"/>
    </ligand>
</feature>
<feature type="binding site" evidence="1">
    <location>
        <position position="55"/>
    </location>
    <ligand>
        <name>ATP</name>
        <dbReference type="ChEBI" id="CHEBI:30616"/>
    </ligand>
</feature>
<feature type="binding site" evidence="1">
    <location>
        <position position="59"/>
    </location>
    <ligand>
        <name>ATP</name>
        <dbReference type="ChEBI" id="CHEBI:30616"/>
    </ligand>
</feature>
<feature type="binding site" evidence="1">
    <location>
        <position position="74"/>
    </location>
    <ligand>
        <name>UMP</name>
        <dbReference type="ChEBI" id="CHEBI:57865"/>
    </ligand>
</feature>
<feature type="binding site" evidence="1">
    <location>
        <begin position="135"/>
        <end position="142"/>
    </location>
    <ligand>
        <name>UMP</name>
        <dbReference type="ChEBI" id="CHEBI:57865"/>
    </ligand>
</feature>
<feature type="binding site" evidence="1">
    <location>
        <position position="163"/>
    </location>
    <ligand>
        <name>ATP</name>
        <dbReference type="ChEBI" id="CHEBI:30616"/>
    </ligand>
</feature>
<feature type="binding site" evidence="1">
    <location>
        <position position="169"/>
    </location>
    <ligand>
        <name>ATP</name>
        <dbReference type="ChEBI" id="CHEBI:30616"/>
    </ligand>
</feature>
<feature type="binding site" evidence="1">
    <location>
        <position position="172"/>
    </location>
    <ligand>
        <name>ATP</name>
        <dbReference type="ChEBI" id="CHEBI:30616"/>
    </ligand>
</feature>
<reference key="1">
    <citation type="journal article" date="2004" name="Nucleic Acids Res.">
        <title>Genome sequence of Symbiobacterium thermophilum, an uncultivable bacterium that depends on microbial commensalism.</title>
        <authorList>
            <person name="Ueda K."/>
            <person name="Yamashita A."/>
            <person name="Ishikawa J."/>
            <person name="Shimada M."/>
            <person name="Watsuji T."/>
            <person name="Morimura K."/>
            <person name="Ikeda H."/>
            <person name="Hattori M."/>
            <person name="Beppu T."/>
        </authorList>
    </citation>
    <scope>NUCLEOTIDE SEQUENCE [LARGE SCALE GENOMIC DNA]</scope>
    <source>
        <strain>DSM 24528 / JCM 14929 / IAM 14863 / T</strain>
    </source>
</reference>
<dbReference type="EC" id="2.7.4.22" evidence="1"/>
<dbReference type="EMBL" id="AP006840">
    <property type="protein sequence ID" value="BAD40478.1"/>
    <property type="molecule type" value="Genomic_DNA"/>
</dbReference>
<dbReference type="RefSeq" id="WP_011195623.1">
    <property type="nucleotide sequence ID" value="NC_006177.1"/>
</dbReference>
<dbReference type="SMR" id="Q67PB5"/>
<dbReference type="STRING" id="292459.STH1493"/>
<dbReference type="KEGG" id="sth:STH1493"/>
<dbReference type="eggNOG" id="COG0528">
    <property type="taxonomic scope" value="Bacteria"/>
</dbReference>
<dbReference type="HOGENOM" id="CLU_033861_0_0_9"/>
<dbReference type="OrthoDB" id="9807458at2"/>
<dbReference type="UniPathway" id="UPA00159">
    <property type="reaction ID" value="UER00275"/>
</dbReference>
<dbReference type="Proteomes" id="UP000000417">
    <property type="component" value="Chromosome"/>
</dbReference>
<dbReference type="GO" id="GO:0005737">
    <property type="term" value="C:cytoplasm"/>
    <property type="evidence" value="ECO:0007669"/>
    <property type="project" value="UniProtKB-SubCell"/>
</dbReference>
<dbReference type="GO" id="GO:0005524">
    <property type="term" value="F:ATP binding"/>
    <property type="evidence" value="ECO:0007669"/>
    <property type="project" value="UniProtKB-KW"/>
</dbReference>
<dbReference type="GO" id="GO:0033862">
    <property type="term" value="F:UMP kinase activity"/>
    <property type="evidence" value="ECO:0007669"/>
    <property type="project" value="UniProtKB-EC"/>
</dbReference>
<dbReference type="GO" id="GO:0044210">
    <property type="term" value="P:'de novo' CTP biosynthetic process"/>
    <property type="evidence" value="ECO:0007669"/>
    <property type="project" value="UniProtKB-UniRule"/>
</dbReference>
<dbReference type="GO" id="GO:0006225">
    <property type="term" value="P:UDP biosynthetic process"/>
    <property type="evidence" value="ECO:0007669"/>
    <property type="project" value="TreeGrafter"/>
</dbReference>
<dbReference type="CDD" id="cd04254">
    <property type="entry name" value="AAK_UMPK-PyrH-Ec"/>
    <property type="match status" value="1"/>
</dbReference>
<dbReference type="FunFam" id="3.40.1160.10:FF:000001">
    <property type="entry name" value="Uridylate kinase"/>
    <property type="match status" value="1"/>
</dbReference>
<dbReference type="Gene3D" id="3.40.1160.10">
    <property type="entry name" value="Acetylglutamate kinase-like"/>
    <property type="match status" value="1"/>
</dbReference>
<dbReference type="HAMAP" id="MF_01220_B">
    <property type="entry name" value="PyrH_B"/>
    <property type="match status" value="1"/>
</dbReference>
<dbReference type="InterPro" id="IPR036393">
    <property type="entry name" value="AceGlu_kinase-like_sf"/>
</dbReference>
<dbReference type="InterPro" id="IPR001048">
    <property type="entry name" value="Asp/Glu/Uridylate_kinase"/>
</dbReference>
<dbReference type="InterPro" id="IPR011817">
    <property type="entry name" value="Uridylate_kinase"/>
</dbReference>
<dbReference type="InterPro" id="IPR015963">
    <property type="entry name" value="Uridylate_kinase_bac"/>
</dbReference>
<dbReference type="NCBIfam" id="TIGR02075">
    <property type="entry name" value="pyrH_bact"/>
    <property type="match status" value="1"/>
</dbReference>
<dbReference type="PANTHER" id="PTHR42833">
    <property type="entry name" value="URIDYLATE KINASE"/>
    <property type="match status" value="1"/>
</dbReference>
<dbReference type="PANTHER" id="PTHR42833:SF4">
    <property type="entry name" value="URIDYLATE KINASE PUMPKIN, CHLOROPLASTIC"/>
    <property type="match status" value="1"/>
</dbReference>
<dbReference type="Pfam" id="PF00696">
    <property type="entry name" value="AA_kinase"/>
    <property type="match status" value="1"/>
</dbReference>
<dbReference type="PIRSF" id="PIRSF005650">
    <property type="entry name" value="Uridylate_kin"/>
    <property type="match status" value="1"/>
</dbReference>
<dbReference type="SUPFAM" id="SSF53633">
    <property type="entry name" value="Carbamate kinase-like"/>
    <property type="match status" value="1"/>
</dbReference>